<dbReference type="EC" id="2.1.1.174" evidence="1"/>
<dbReference type="EMBL" id="AL939107">
    <property type="protein sequence ID" value="CAB96026.1"/>
    <property type="status" value="ALT_INIT"/>
    <property type="molecule type" value="Genomic_DNA"/>
</dbReference>
<dbReference type="RefSeq" id="NP_625336.1">
    <property type="nucleotide sequence ID" value="NC_003888.3"/>
</dbReference>
<dbReference type="SMR" id="Q9K3L9"/>
<dbReference type="STRING" id="100226.gene:17758624"/>
<dbReference type="PaxDb" id="100226-SCO1041"/>
<dbReference type="KEGG" id="sco:SCO1041"/>
<dbReference type="PATRIC" id="fig|100226.15.peg.1036"/>
<dbReference type="eggNOG" id="COG2813">
    <property type="taxonomic scope" value="Bacteria"/>
</dbReference>
<dbReference type="HOGENOM" id="CLU_040288_4_0_11"/>
<dbReference type="InParanoid" id="Q9K3L9"/>
<dbReference type="OrthoDB" id="29650at2"/>
<dbReference type="PhylomeDB" id="Q9K3L9"/>
<dbReference type="Proteomes" id="UP000001973">
    <property type="component" value="Chromosome"/>
</dbReference>
<dbReference type="GO" id="GO:0005737">
    <property type="term" value="C:cytoplasm"/>
    <property type="evidence" value="ECO:0007669"/>
    <property type="project" value="UniProtKB-SubCell"/>
</dbReference>
<dbReference type="GO" id="GO:0052916">
    <property type="term" value="F:23S rRNA (guanine(1835)-N(2))-methyltransferase activity"/>
    <property type="evidence" value="ECO:0007669"/>
    <property type="project" value="UniProtKB-EC"/>
</dbReference>
<dbReference type="GO" id="GO:0003677">
    <property type="term" value="F:DNA binding"/>
    <property type="evidence" value="ECO:0007669"/>
    <property type="project" value="InterPro"/>
</dbReference>
<dbReference type="GO" id="GO:0008990">
    <property type="term" value="F:rRNA (guanine-N2-)-methyltransferase activity"/>
    <property type="evidence" value="ECO:0000318"/>
    <property type="project" value="GO_Central"/>
</dbReference>
<dbReference type="GO" id="GO:0070475">
    <property type="term" value="P:rRNA base methylation"/>
    <property type="evidence" value="ECO:0000318"/>
    <property type="project" value="GO_Central"/>
</dbReference>
<dbReference type="CDD" id="cd02440">
    <property type="entry name" value="AdoMet_MTases"/>
    <property type="match status" value="1"/>
</dbReference>
<dbReference type="Gene3D" id="3.40.50.150">
    <property type="entry name" value="Vaccinia Virus protein VP39"/>
    <property type="match status" value="2"/>
</dbReference>
<dbReference type="HAMAP" id="MF_01859">
    <property type="entry name" value="23SrRNA_methyltr_G"/>
    <property type="match status" value="1"/>
</dbReference>
<dbReference type="InterPro" id="IPR002052">
    <property type="entry name" value="DNA_methylase_N6_adenine_CS"/>
</dbReference>
<dbReference type="InterPro" id="IPR001091">
    <property type="entry name" value="RM_Methyltransferase"/>
</dbReference>
<dbReference type="InterPro" id="IPR017237">
    <property type="entry name" value="rRNA_m2G-MeTrfase_RlmG"/>
</dbReference>
<dbReference type="InterPro" id="IPR046977">
    <property type="entry name" value="RsmC/RlmG"/>
</dbReference>
<dbReference type="InterPro" id="IPR029063">
    <property type="entry name" value="SAM-dependent_MTases_sf"/>
</dbReference>
<dbReference type="InterPro" id="IPR007848">
    <property type="entry name" value="Small_mtfrase_dom"/>
</dbReference>
<dbReference type="PANTHER" id="PTHR47816:SF5">
    <property type="entry name" value="RIBOSOMAL RNA LARGE SUBUNIT METHYLTRANSFERASE G"/>
    <property type="match status" value="1"/>
</dbReference>
<dbReference type="PANTHER" id="PTHR47816">
    <property type="entry name" value="RIBOSOMAL RNA SMALL SUBUNIT METHYLTRANSFERASE C"/>
    <property type="match status" value="1"/>
</dbReference>
<dbReference type="Pfam" id="PF05175">
    <property type="entry name" value="MTS"/>
    <property type="match status" value="1"/>
</dbReference>
<dbReference type="PIRSF" id="PIRSF037565">
    <property type="entry name" value="RRNA_m2G_Mtase_RsmD_prd"/>
    <property type="match status" value="1"/>
</dbReference>
<dbReference type="PRINTS" id="PR00508">
    <property type="entry name" value="S21N4MTFRASE"/>
</dbReference>
<dbReference type="SUPFAM" id="SSF53335">
    <property type="entry name" value="S-adenosyl-L-methionine-dependent methyltransferases"/>
    <property type="match status" value="1"/>
</dbReference>
<feature type="chain" id="PRO_0000366528" description="Ribosomal RNA large subunit methyltransferase G">
    <location>
        <begin position="1"/>
        <end position="377"/>
    </location>
</feature>
<name>RLMG_STRCO</name>
<protein>
    <recommendedName>
        <fullName evidence="1">Ribosomal RNA large subunit methyltransferase G</fullName>
        <ecNumber evidence="1">2.1.1.174</ecNumber>
    </recommendedName>
    <alternativeName>
        <fullName evidence="1">23S rRNA m2G1835 methyltransferase</fullName>
    </alternativeName>
    <alternativeName>
        <fullName evidence="1">rRNA (guanine-N(2)-)-methyltransferase RlmG</fullName>
    </alternativeName>
</protein>
<accession>Q9K3L9</accession>
<keyword id="KW-0963">Cytoplasm</keyword>
<keyword id="KW-0489">Methyltransferase</keyword>
<keyword id="KW-1185">Reference proteome</keyword>
<keyword id="KW-0698">rRNA processing</keyword>
<keyword id="KW-0949">S-adenosyl-L-methionine</keyword>
<keyword id="KW-0808">Transferase</keyword>
<reference key="1">
    <citation type="journal article" date="2002" name="Nature">
        <title>Complete genome sequence of the model actinomycete Streptomyces coelicolor A3(2).</title>
        <authorList>
            <person name="Bentley S.D."/>
            <person name="Chater K.F."/>
            <person name="Cerdeno-Tarraga A.-M."/>
            <person name="Challis G.L."/>
            <person name="Thomson N.R."/>
            <person name="James K.D."/>
            <person name="Harris D.E."/>
            <person name="Quail M.A."/>
            <person name="Kieser H."/>
            <person name="Harper D."/>
            <person name="Bateman A."/>
            <person name="Brown S."/>
            <person name="Chandra G."/>
            <person name="Chen C.W."/>
            <person name="Collins M."/>
            <person name="Cronin A."/>
            <person name="Fraser A."/>
            <person name="Goble A."/>
            <person name="Hidalgo J."/>
            <person name="Hornsby T."/>
            <person name="Howarth S."/>
            <person name="Huang C.-H."/>
            <person name="Kieser T."/>
            <person name="Larke L."/>
            <person name="Murphy L.D."/>
            <person name="Oliver K."/>
            <person name="O'Neil S."/>
            <person name="Rabbinowitsch E."/>
            <person name="Rajandream M.A."/>
            <person name="Rutherford K.M."/>
            <person name="Rutter S."/>
            <person name="Seeger K."/>
            <person name="Saunders D."/>
            <person name="Sharp S."/>
            <person name="Squares R."/>
            <person name="Squares S."/>
            <person name="Taylor K."/>
            <person name="Warren T."/>
            <person name="Wietzorrek A."/>
            <person name="Woodward J.R."/>
            <person name="Barrell B.G."/>
            <person name="Parkhill J."/>
            <person name="Hopwood D.A."/>
        </authorList>
    </citation>
    <scope>NUCLEOTIDE SEQUENCE [LARGE SCALE GENOMIC DNA]</scope>
    <source>
        <strain>ATCC BAA-471 / A3(2) / M145</strain>
    </source>
</reference>
<organism>
    <name type="scientific">Streptomyces coelicolor (strain ATCC BAA-471 / A3(2) / M145)</name>
    <dbReference type="NCBI Taxonomy" id="100226"/>
    <lineage>
        <taxon>Bacteria</taxon>
        <taxon>Bacillati</taxon>
        <taxon>Actinomycetota</taxon>
        <taxon>Actinomycetes</taxon>
        <taxon>Kitasatosporales</taxon>
        <taxon>Streptomycetaceae</taxon>
        <taxon>Streptomyces</taxon>
        <taxon>Streptomyces albidoflavus group</taxon>
    </lineage>
</organism>
<comment type="function">
    <text evidence="1">Specifically methylates the guanine in position 1835 (m2G1835) of 23S rRNA.</text>
</comment>
<comment type="catalytic activity">
    <reaction evidence="1">
        <text>guanosine(1835) in 23S rRNA + S-adenosyl-L-methionine = N(2)-methylguanosine(1835) in 23S rRNA + S-adenosyl-L-homocysteine + H(+)</text>
        <dbReference type="Rhea" id="RHEA:42744"/>
        <dbReference type="Rhea" id="RHEA-COMP:10217"/>
        <dbReference type="Rhea" id="RHEA-COMP:10218"/>
        <dbReference type="ChEBI" id="CHEBI:15378"/>
        <dbReference type="ChEBI" id="CHEBI:57856"/>
        <dbReference type="ChEBI" id="CHEBI:59789"/>
        <dbReference type="ChEBI" id="CHEBI:74269"/>
        <dbReference type="ChEBI" id="CHEBI:74481"/>
        <dbReference type="EC" id="2.1.1.174"/>
    </reaction>
</comment>
<comment type="subcellular location">
    <subcellularLocation>
        <location evidence="1">Cytoplasm</location>
    </subcellularLocation>
</comment>
<comment type="similarity">
    <text evidence="1">Belongs to the methyltransferase superfamily. RlmG family.</text>
</comment>
<comment type="sequence caution" evidence="2">
    <conflict type="erroneous initiation">
        <sequence resource="EMBL-CDS" id="CAB96026"/>
    </conflict>
</comment>
<evidence type="ECO:0000255" key="1">
    <source>
        <dbReference type="HAMAP-Rule" id="MF_01859"/>
    </source>
</evidence>
<evidence type="ECO:0000305" key="2"/>
<gene>
    <name evidence="1" type="primary">rlmG</name>
    <name type="ordered locus">SCO1041</name>
    <name type="ORF">SCG20A.21</name>
</gene>
<proteinExistence type="inferred from homology"/>
<sequence>MTTPWGERVLSRFPEDPRDRLRAWDASDEYLLGHLAEREVPLSGTVVVVGDRWGALVTALAPHRPVQITDSHLAREATRVNLERSGVEPGSVRLLTTQDPPPDRVDVLLVRVPKSLALLEDQLLRLAPALHEGTVVVGTGMVKEIHTSTLRLFERIVGPTRTSLAVKKARLIFAEPDPALKRPANPWPLGYRLPDDVGRLSGRPVVNHAGVFCADRLDIGTRFFLRHLPAPGRFRRVVDLGCGNGVVGTAVSLADPDAELLFTDESFQAVASARATYRANEVAGQAEFRVGDGLAGVPDGSVDLVLNNPPFHSHQATTGATAWRMFTGARRVLRPGGELWVVGNRHLGYHVRLRRLFGNSELVAGDRKFVVLKAVKE</sequence>